<gene>
    <name evidence="1" type="primary">leuC</name>
    <name type="ordered locus">Vapar_1422</name>
</gene>
<protein>
    <recommendedName>
        <fullName evidence="1">3-isopropylmalate dehydratase large subunit</fullName>
        <ecNumber evidence="1">4.2.1.33</ecNumber>
    </recommendedName>
    <alternativeName>
        <fullName evidence="1">Alpha-IPM isomerase</fullName>
        <shortName evidence="1">IPMI</shortName>
    </alternativeName>
    <alternativeName>
        <fullName evidence="1">Isopropylmalate isomerase</fullName>
    </alternativeName>
</protein>
<organism>
    <name type="scientific">Variovorax paradoxus (strain S110)</name>
    <dbReference type="NCBI Taxonomy" id="543728"/>
    <lineage>
        <taxon>Bacteria</taxon>
        <taxon>Pseudomonadati</taxon>
        <taxon>Pseudomonadota</taxon>
        <taxon>Betaproteobacteria</taxon>
        <taxon>Burkholderiales</taxon>
        <taxon>Comamonadaceae</taxon>
        <taxon>Variovorax</taxon>
    </lineage>
</organism>
<proteinExistence type="inferred from homology"/>
<dbReference type="EC" id="4.2.1.33" evidence="1"/>
<dbReference type="EMBL" id="CP001635">
    <property type="protein sequence ID" value="ACS18073.1"/>
    <property type="molecule type" value="Genomic_DNA"/>
</dbReference>
<dbReference type="SMR" id="C5CSH5"/>
<dbReference type="STRING" id="543728.Vapar_1422"/>
<dbReference type="KEGG" id="vap:Vapar_1422"/>
<dbReference type="eggNOG" id="COG0065">
    <property type="taxonomic scope" value="Bacteria"/>
</dbReference>
<dbReference type="HOGENOM" id="CLU_006714_3_4_4"/>
<dbReference type="OrthoDB" id="9802769at2"/>
<dbReference type="UniPathway" id="UPA00048">
    <property type="reaction ID" value="UER00071"/>
</dbReference>
<dbReference type="GO" id="GO:0003861">
    <property type="term" value="F:3-isopropylmalate dehydratase activity"/>
    <property type="evidence" value="ECO:0007669"/>
    <property type="project" value="UniProtKB-UniRule"/>
</dbReference>
<dbReference type="GO" id="GO:0051539">
    <property type="term" value="F:4 iron, 4 sulfur cluster binding"/>
    <property type="evidence" value="ECO:0007669"/>
    <property type="project" value="UniProtKB-KW"/>
</dbReference>
<dbReference type="GO" id="GO:0046872">
    <property type="term" value="F:metal ion binding"/>
    <property type="evidence" value="ECO:0007669"/>
    <property type="project" value="UniProtKB-KW"/>
</dbReference>
<dbReference type="GO" id="GO:0009098">
    <property type="term" value="P:L-leucine biosynthetic process"/>
    <property type="evidence" value="ECO:0007669"/>
    <property type="project" value="UniProtKB-UniRule"/>
</dbReference>
<dbReference type="CDD" id="cd01583">
    <property type="entry name" value="IPMI"/>
    <property type="match status" value="1"/>
</dbReference>
<dbReference type="FunFam" id="3.30.499.10:FF:000007">
    <property type="entry name" value="3-isopropylmalate dehydratase large subunit"/>
    <property type="match status" value="1"/>
</dbReference>
<dbReference type="Gene3D" id="3.30.499.10">
    <property type="entry name" value="Aconitase, domain 3"/>
    <property type="match status" value="2"/>
</dbReference>
<dbReference type="HAMAP" id="MF_01026">
    <property type="entry name" value="LeuC_type1"/>
    <property type="match status" value="1"/>
</dbReference>
<dbReference type="InterPro" id="IPR004430">
    <property type="entry name" value="3-IsopropMal_deHydase_lsu"/>
</dbReference>
<dbReference type="InterPro" id="IPR015931">
    <property type="entry name" value="Acnase/IPM_dHydase_lsu_aba_1/3"/>
</dbReference>
<dbReference type="InterPro" id="IPR001030">
    <property type="entry name" value="Acoase/IPM_deHydtase_lsu_aba"/>
</dbReference>
<dbReference type="InterPro" id="IPR018136">
    <property type="entry name" value="Aconitase_4Fe-4S_BS"/>
</dbReference>
<dbReference type="InterPro" id="IPR036008">
    <property type="entry name" value="Aconitase_4Fe-4S_dom"/>
</dbReference>
<dbReference type="InterPro" id="IPR050067">
    <property type="entry name" value="IPM_dehydratase_rel_enz"/>
</dbReference>
<dbReference type="InterPro" id="IPR033941">
    <property type="entry name" value="IPMI_cat"/>
</dbReference>
<dbReference type="NCBIfam" id="TIGR00170">
    <property type="entry name" value="leuC"/>
    <property type="match status" value="1"/>
</dbReference>
<dbReference type="NCBIfam" id="NF004016">
    <property type="entry name" value="PRK05478.1"/>
    <property type="match status" value="1"/>
</dbReference>
<dbReference type="NCBIfam" id="NF009116">
    <property type="entry name" value="PRK12466.1"/>
    <property type="match status" value="1"/>
</dbReference>
<dbReference type="PANTHER" id="PTHR43822:SF9">
    <property type="entry name" value="3-ISOPROPYLMALATE DEHYDRATASE"/>
    <property type="match status" value="1"/>
</dbReference>
<dbReference type="PANTHER" id="PTHR43822">
    <property type="entry name" value="HOMOACONITASE, MITOCHONDRIAL-RELATED"/>
    <property type="match status" value="1"/>
</dbReference>
<dbReference type="Pfam" id="PF00330">
    <property type="entry name" value="Aconitase"/>
    <property type="match status" value="1"/>
</dbReference>
<dbReference type="PRINTS" id="PR00415">
    <property type="entry name" value="ACONITASE"/>
</dbReference>
<dbReference type="SUPFAM" id="SSF53732">
    <property type="entry name" value="Aconitase iron-sulfur domain"/>
    <property type="match status" value="1"/>
</dbReference>
<dbReference type="PROSITE" id="PS00450">
    <property type="entry name" value="ACONITASE_1"/>
    <property type="match status" value="1"/>
</dbReference>
<dbReference type="PROSITE" id="PS01244">
    <property type="entry name" value="ACONITASE_2"/>
    <property type="match status" value="1"/>
</dbReference>
<sequence>MARTLYDKIWDEHVVHTEEDGTAILYIDRHLVHEVTSPQAFEGLREAGRKLWRISSVVATADHNTPTTGWERGYEGIADPTSKEQVTTLDKNIAEFGAAAFFPFLSKRQGIVHVIGPESGATLPGMTVVCGDSHTSTHGAFGALAHGIGTSEVEHVMATQTLLGKKAKNMLVKVEGKLPFGCTAKDIVLAIIGKIGTAGGTGYTIEFAGSAIRDLSMEGRMTVCNMAIEAGARAGLVAVDEKTIGYIKGRPLAPTGVEWDQAVAYWRTLQSDPDAAFDAVVELDATQIQPQVTWGTSPEMVVDINGRVPDPDKEKDASKRSAIERALVYMGLEPNKAMNDIFIDKVFIGSCTNSRIEDMREAAAVVKKLGQKVAKNVKLAMVVPGSGVVKEQAEREGLDVIFKAAGFEWREPGCSMCLAMNADRLEPGERCASTSNRNFEGRQGAGGRTHLVSPAMAAAAAVHGHFVDVRTFA</sequence>
<accession>C5CSH5</accession>
<name>LEUC_VARPS</name>
<keyword id="KW-0004">4Fe-4S</keyword>
<keyword id="KW-0028">Amino-acid biosynthesis</keyword>
<keyword id="KW-0100">Branched-chain amino acid biosynthesis</keyword>
<keyword id="KW-0408">Iron</keyword>
<keyword id="KW-0411">Iron-sulfur</keyword>
<keyword id="KW-0432">Leucine biosynthesis</keyword>
<keyword id="KW-0456">Lyase</keyword>
<keyword id="KW-0479">Metal-binding</keyword>
<comment type="function">
    <text evidence="1">Catalyzes the isomerization between 2-isopropylmalate and 3-isopropylmalate, via the formation of 2-isopropylmaleate.</text>
</comment>
<comment type="catalytic activity">
    <reaction evidence="1">
        <text>(2R,3S)-3-isopropylmalate = (2S)-2-isopropylmalate</text>
        <dbReference type="Rhea" id="RHEA:32287"/>
        <dbReference type="ChEBI" id="CHEBI:1178"/>
        <dbReference type="ChEBI" id="CHEBI:35121"/>
        <dbReference type="EC" id="4.2.1.33"/>
    </reaction>
</comment>
<comment type="cofactor">
    <cofactor evidence="1">
        <name>[4Fe-4S] cluster</name>
        <dbReference type="ChEBI" id="CHEBI:49883"/>
    </cofactor>
    <text evidence="1">Binds 1 [4Fe-4S] cluster per subunit.</text>
</comment>
<comment type="pathway">
    <text evidence="1">Amino-acid biosynthesis; L-leucine biosynthesis; L-leucine from 3-methyl-2-oxobutanoate: step 2/4.</text>
</comment>
<comment type="subunit">
    <text evidence="1">Heterodimer of LeuC and LeuD.</text>
</comment>
<comment type="similarity">
    <text evidence="1">Belongs to the aconitase/IPM isomerase family. LeuC type 1 subfamily.</text>
</comment>
<evidence type="ECO:0000255" key="1">
    <source>
        <dbReference type="HAMAP-Rule" id="MF_01026"/>
    </source>
</evidence>
<reference key="1">
    <citation type="journal article" date="2011" name="J. Bacteriol.">
        <title>Complete genome sequence of the metabolically versatile plant growth-promoting endophyte, Variovorax paradoxus S110.</title>
        <authorList>
            <person name="Han J.I."/>
            <person name="Choi H.K."/>
            <person name="Lee S.W."/>
            <person name="Orwin P.M."/>
            <person name="Kim J."/>
            <person name="Laroe S.L."/>
            <person name="Kim T.G."/>
            <person name="O'Neil J."/>
            <person name="Leadbetter J.R."/>
            <person name="Lee S.Y."/>
            <person name="Hur C.G."/>
            <person name="Spain J.C."/>
            <person name="Ovchinnikova G."/>
            <person name="Goodwin L."/>
            <person name="Han C."/>
        </authorList>
    </citation>
    <scope>NUCLEOTIDE SEQUENCE [LARGE SCALE GENOMIC DNA]</scope>
    <source>
        <strain>S110</strain>
    </source>
</reference>
<feature type="chain" id="PRO_1000213333" description="3-isopropylmalate dehydratase large subunit">
    <location>
        <begin position="1"/>
        <end position="473"/>
    </location>
</feature>
<feature type="binding site" evidence="1">
    <location>
        <position position="351"/>
    </location>
    <ligand>
        <name>[4Fe-4S] cluster</name>
        <dbReference type="ChEBI" id="CHEBI:49883"/>
    </ligand>
</feature>
<feature type="binding site" evidence="1">
    <location>
        <position position="414"/>
    </location>
    <ligand>
        <name>[4Fe-4S] cluster</name>
        <dbReference type="ChEBI" id="CHEBI:49883"/>
    </ligand>
</feature>
<feature type="binding site" evidence="1">
    <location>
        <position position="417"/>
    </location>
    <ligand>
        <name>[4Fe-4S] cluster</name>
        <dbReference type="ChEBI" id="CHEBI:49883"/>
    </ligand>
</feature>